<accession>A5VS49</accession>
<sequence length="448" mass="48606">MGLSPVNIFKPFGLGRAKAVIAAVSGGSDSLGLLFLLKDYLSTLESPPVLIAVTVDHKLRAESALEAENVGLLCQKHGIMHCVLSWDDPKPAHGLAAAARTARYRLLVQAARDAGAGFIVTGHTENDQIETFLMRKARSGHCEARGLAAMSPRSLLEGSVELARPLLTVSRQALRDELTRRGIAWVDDPSNANIDYERPRVRLGVAAEADGQEVLEQIAQAGAARERDNAALVEALADPATLGVDAAGMMFLNADCYAALSPGARQLFSGLLASIAGGRRFLPGDGERRRIERMLSGQDAPRRLTVFGALIERGEKGAPHRFRRERRNLPKLDLVPGQHIVWDGRFCFFNSGGRSFEIAPPGRQELIDFLKNSGRDIESRRCEALLISPALYEGGKLAFVPFLPGAEWPQGVHIERHFAIFDHVLPGHDFALAQAVEARLGRACAEIS</sequence>
<proteinExistence type="inferred from homology"/>
<organism>
    <name type="scientific">Brucella ovis (strain ATCC 25840 / 63/290 / NCTC 10512)</name>
    <dbReference type="NCBI Taxonomy" id="444178"/>
    <lineage>
        <taxon>Bacteria</taxon>
        <taxon>Pseudomonadati</taxon>
        <taxon>Pseudomonadota</taxon>
        <taxon>Alphaproteobacteria</taxon>
        <taxon>Hyphomicrobiales</taxon>
        <taxon>Brucellaceae</taxon>
        <taxon>Brucella/Ochrobactrum group</taxon>
        <taxon>Brucella</taxon>
    </lineage>
</organism>
<keyword id="KW-0067">ATP-binding</keyword>
<keyword id="KW-0963">Cytoplasm</keyword>
<keyword id="KW-0436">Ligase</keyword>
<keyword id="KW-0547">Nucleotide-binding</keyword>
<keyword id="KW-0819">tRNA processing</keyword>
<name>TILS_BRUO2</name>
<gene>
    <name evidence="1" type="primary">tilS</name>
    <name type="ordered locus">BOV_1636</name>
</gene>
<feature type="chain" id="PRO_1000065606" description="tRNA(Ile)-lysidine synthase">
    <location>
        <begin position="1"/>
        <end position="448"/>
    </location>
</feature>
<feature type="binding site" evidence="1">
    <location>
        <begin position="25"/>
        <end position="30"/>
    </location>
    <ligand>
        <name>ATP</name>
        <dbReference type="ChEBI" id="CHEBI:30616"/>
    </ligand>
</feature>
<evidence type="ECO:0000255" key="1">
    <source>
        <dbReference type="HAMAP-Rule" id="MF_01161"/>
    </source>
</evidence>
<comment type="function">
    <text evidence="1">Ligates lysine onto the cytidine present at position 34 of the AUA codon-specific tRNA(Ile) that contains the anticodon CAU, in an ATP-dependent manner. Cytidine is converted to lysidine, thus changing the amino acid specificity of the tRNA from methionine to isoleucine.</text>
</comment>
<comment type="catalytic activity">
    <reaction evidence="1">
        <text>cytidine(34) in tRNA(Ile2) + L-lysine + ATP = lysidine(34) in tRNA(Ile2) + AMP + diphosphate + H(+)</text>
        <dbReference type="Rhea" id="RHEA:43744"/>
        <dbReference type="Rhea" id="RHEA-COMP:10625"/>
        <dbReference type="Rhea" id="RHEA-COMP:10670"/>
        <dbReference type="ChEBI" id="CHEBI:15378"/>
        <dbReference type="ChEBI" id="CHEBI:30616"/>
        <dbReference type="ChEBI" id="CHEBI:32551"/>
        <dbReference type="ChEBI" id="CHEBI:33019"/>
        <dbReference type="ChEBI" id="CHEBI:82748"/>
        <dbReference type="ChEBI" id="CHEBI:83665"/>
        <dbReference type="ChEBI" id="CHEBI:456215"/>
        <dbReference type="EC" id="6.3.4.19"/>
    </reaction>
</comment>
<comment type="subcellular location">
    <subcellularLocation>
        <location evidence="1">Cytoplasm</location>
    </subcellularLocation>
</comment>
<comment type="domain">
    <text>The N-terminal region contains the highly conserved SGGXDS motif, predicted to be a P-loop motif involved in ATP binding.</text>
</comment>
<comment type="similarity">
    <text evidence="1">Belongs to the tRNA(Ile)-lysidine synthase family.</text>
</comment>
<reference key="1">
    <citation type="journal article" date="2009" name="PLoS ONE">
        <title>Genome degradation in Brucella ovis corresponds with narrowing of its host range and tissue tropism.</title>
        <authorList>
            <person name="Tsolis R.M."/>
            <person name="Seshadri R."/>
            <person name="Santos R.L."/>
            <person name="Sangari F.J."/>
            <person name="Lobo J.M."/>
            <person name="de Jong M.F."/>
            <person name="Ren Q."/>
            <person name="Myers G."/>
            <person name="Brinkac L.M."/>
            <person name="Nelson W.C."/>
            <person name="Deboy R.T."/>
            <person name="Angiuoli S."/>
            <person name="Khouri H."/>
            <person name="Dimitrov G."/>
            <person name="Robinson J.R."/>
            <person name="Mulligan S."/>
            <person name="Walker R.L."/>
            <person name="Elzer P.E."/>
            <person name="Hassan K.A."/>
            <person name="Paulsen I.T."/>
        </authorList>
    </citation>
    <scope>NUCLEOTIDE SEQUENCE [LARGE SCALE GENOMIC DNA]</scope>
    <source>
        <strain>ATCC 25840 / 63/290 / NCTC 10512</strain>
    </source>
</reference>
<dbReference type="EC" id="6.3.4.19" evidence="1"/>
<dbReference type="EMBL" id="CP000708">
    <property type="protein sequence ID" value="ABQ61239.1"/>
    <property type="molecule type" value="Genomic_DNA"/>
</dbReference>
<dbReference type="RefSeq" id="WP_002967893.1">
    <property type="nucleotide sequence ID" value="NC_009505.1"/>
</dbReference>
<dbReference type="SMR" id="A5VS49"/>
<dbReference type="GeneID" id="93017943"/>
<dbReference type="KEGG" id="bov:BOV_1636"/>
<dbReference type="HOGENOM" id="CLU_018869_3_3_5"/>
<dbReference type="PhylomeDB" id="A5VS49"/>
<dbReference type="Proteomes" id="UP000006383">
    <property type="component" value="Chromosome I"/>
</dbReference>
<dbReference type="GO" id="GO:0005737">
    <property type="term" value="C:cytoplasm"/>
    <property type="evidence" value="ECO:0007669"/>
    <property type="project" value="UniProtKB-SubCell"/>
</dbReference>
<dbReference type="GO" id="GO:0005524">
    <property type="term" value="F:ATP binding"/>
    <property type="evidence" value="ECO:0007669"/>
    <property type="project" value="UniProtKB-UniRule"/>
</dbReference>
<dbReference type="GO" id="GO:0032267">
    <property type="term" value="F:tRNA(Ile)-lysidine synthase activity"/>
    <property type="evidence" value="ECO:0007669"/>
    <property type="project" value="UniProtKB-EC"/>
</dbReference>
<dbReference type="GO" id="GO:0006400">
    <property type="term" value="P:tRNA modification"/>
    <property type="evidence" value="ECO:0007669"/>
    <property type="project" value="UniProtKB-UniRule"/>
</dbReference>
<dbReference type="CDD" id="cd01992">
    <property type="entry name" value="TilS_N"/>
    <property type="match status" value="1"/>
</dbReference>
<dbReference type="Gene3D" id="3.40.50.620">
    <property type="entry name" value="HUPs"/>
    <property type="match status" value="1"/>
</dbReference>
<dbReference type="HAMAP" id="MF_01161">
    <property type="entry name" value="tRNA_Ile_lys_synt"/>
    <property type="match status" value="1"/>
</dbReference>
<dbReference type="InterPro" id="IPR014729">
    <property type="entry name" value="Rossmann-like_a/b/a_fold"/>
</dbReference>
<dbReference type="InterPro" id="IPR011063">
    <property type="entry name" value="TilS/TtcA_N"/>
</dbReference>
<dbReference type="InterPro" id="IPR012094">
    <property type="entry name" value="tRNA_Ile_lys_synt"/>
</dbReference>
<dbReference type="InterPro" id="IPR012795">
    <property type="entry name" value="tRNA_Ile_lys_synt_N"/>
</dbReference>
<dbReference type="NCBIfam" id="TIGR02432">
    <property type="entry name" value="lysidine_TilS_N"/>
    <property type="match status" value="1"/>
</dbReference>
<dbReference type="PANTHER" id="PTHR43033">
    <property type="entry name" value="TRNA(ILE)-LYSIDINE SYNTHASE-RELATED"/>
    <property type="match status" value="1"/>
</dbReference>
<dbReference type="PANTHER" id="PTHR43033:SF1">
    <property type="entry name" value="TRNA(ILE)-LYSIDINE SYNTHASE-RELATED"/>
    <property type="match status" value="1"/>
</dbReference>
<dbReference type="Pfam" id="PF01171">
    <property type="entry name" value="ATP_bind_3"/>
    <property type="match status" value="1"/>
</dbReference>
<dbReference type="SUPFAM" id="SSF52402">
    <property type="entry name" value="Adenine nucleotide alpha hydrolases-like"/>
    <property type="match status" value="1"/>
</dbReference>
<protein>
    <recommendedName>
        <fullName evidence="1">tRNA(Ile)-lysidine synthase</fullName>
        <ecNumber evidence="1">6.3.4.19</ecNumber>
    </recommendedName>
    <alternativeName>
        <fullName evidence="1">tRNA(Ile)-2-lysyl-cytidine synthase</fullName>
    </alternativeName>
    <alternativeName>
        <fullName evidence="1">tRNA(Ile)-lysidine synthetase</fullName>
    </alternativeName>
</protein>